<name>SYI_NEIMF</name>
<accession>A1KS62</accession>
<organism>
    <name type="scientific">Neisseria meningitidis serogroup C / serotype 2a (strain ATCC 700532 / DSM 15464 / FAM18)</name>
    <dbReference type="NCBI Taxonomy" id="272831"/>
    <lineage>
        <taxon>Bacteria</taxon>
        <taxon>Pseudomonadati</taxon>
        <taxon>Pseudomonadota</taxon>
        <taxon>Betaproteobacteria</taxon>
        <taxon>Neisseriales</taxon>
        <taxon>Neisseriaceae</taxon>
        <taxon>Neisseria</taxon>
    </lineage>
</organism>
<gene>
    <name evidence="1" type="primary">ileS</name>
    <name type="ordered locus">NMC0383</name>
</gene>
<keyword id="KW-0030">Aminoacyl-tRNA synthetase</keyword>
<keyword id="KW-0067">ATP-binding</keyword>
<keyword id="KW-0963">Cytoplasm</keyword>
<keyword id="KW-0436">Ligase</keyword>
<keyword id="KW-0479">Metal-binding</keyword>
<keyword id="KW-0547">Nucleotide-binding</keyword>
<keyword id="KW-0648">Protein biosynthesis</keyword>
<keyword id="KW-0862">Zinc</keyword>
<evidence type="ECO:0000255" key="1">
    <source>
        <dbReference type="HAMAP-Rule" id="MF_02002"/>
    </source>
</evidence>
<reference key="1">
    <citation type="journal article" date="2007" name="PLoS Genet.">
        <title>Meningococcal genetic variation mechanisms viewed through comparative analysis of serogroup C strain FAM18.</title>
        <authorList>
            <person name="Bentley S.D."/>
            <person name="Vernikos G.S."/>
            <person name="Snyder L.A.S."/>
            <person name="Churcher C."/>
            <person name="Arrowsmith C."/>
            <person name="Chillingworth T."/>
            <person name="Cronin A."/>
            <person name="Davis P.H."/>
            <person name="Holroyd N.E."/>
            <person name="Jagels K."/>
            <person name="Maddison M."/>
            <person name="Moule S."/>
            <person name="Rabbinowitsch E."/>
            <person name="Sharp S."/>
            <person name="Unwin L."/>
            <person name="Whitehead S."/>
            <person name="Quail M.A."/>
            <person name="Achtman M."/>
            <person name="Barrell B.G."/>
            <person name="Saunders N.J."/>
            <person name="Parkhill J."/>
        </authorList>
    </citation>
    <scope>NUCLEOTIDE SEQUENCE [LARGE SCALE GENOMIC DNA]</scope>
    <source>
        <strain>ATCC 700532 / DSM 15464 / FAM18</strain>
    </source>
</reference>
<proteinExistence type="inferred from homology"/>
<feature type="chain" id="PRO_1000022093" description="Isoleucine--tRNA ligase">
    <location>
        <begin position="1"/>
        <end position="929"/>
    </location>
</feature>
<feature type="short sequence motif" description="'HIGH' region">
    <location>
        <begin position="58"/>
        <end position="68"/>
    </location>
</feature>
<feature type="short sequence motif" description="'KMSKS' region">
    <location>
        <begin position="605"/>
        <end position="609"/>
    </location>
</feature>
<feature type="binding site" evidence="1">
    <location>
        <position position="563"/>
    </location>
    <ligand>
        <name>L-isoleucyl-5'-AMP</name>
        <dbReference type="ChEBI" id="CHEBI:178002"/>
    </ligand>
</feature>
<feature type="binding site" evidence="1">
    <location>
        <position position="608"/>
    </location>
    <ligand>
        <name>ATP</name>
        <dbReference type="ChEBI" id="CHEBI:30616"/>
    </ligand>
</feature>
<feature type="binding site" evidence="1">
    <location>
        <position position="892"/>
    </location>
    <ligand>
        <name>Zn(2+)</name>
        <dbReference type="ChEBI" id="CHEBI:29105"/>
    </ligand>
</feature>
<feature type="binding site" evidence="1">
    <location>
        <position position="895"/>
    </location>
    <ligand>
        <name>Zn(2+)</name>
        <dbReference type="ChEBI" id="CHEBI:29105"/>
    </ligand>
</feature>
<feature type="binding site" evidence="1">
    <location>
        <position position="912"/>
    </location>
    <ligand>
        <name>Zn(2+)</name>
        <dbReference type="ChEBI" id="CHEBI:29105"/>
    </ligand>
</feature>
<feature type="binding site" evidence="1">
    <location>
        <position position="915"/>
    </location>
    <ligand>
        <name>Zn(2+)</name>
        <dbReference type="ChEBI" id="CHEBI:29105"/>
    </ligand>
</feature>
<dbReference type="EC" id="6.1.1.5" evidence="1"/>
<dbReference type="EMBL" id="AM421808">
    <property type="protein sequence ID" value="CAM09692.1"/>
    <property type="molecule type" value="Genomic_DNA"/>
</dbReference>
<dbReference type="RefSeq" id="WP_002221500.1">
    <property type="nucleotide sequence ID" value="NC_008767.1"/>
</dbReference>
<dbReference type="SMR" id="A1KS62"/>
<dbReference type="KEGG" id="nmc:NMC0383"/>
<dbReference type="HOGENOM" id="CLU_001493_7_1_4"/>
<dbReference type="Proteomes" id="UP000002286">
    <property type="component" value="Chromosome"/>
</dbReference>
<dbReference type="GO" id="GO:0005829">
    <property type="term" value="C:cytosol"/>
    <property type="evidence" value="ECO:0007669"/>
    <property type="project" value="TreeGrafter"/>
</dbReference>
<dbReference type="GO" id="GO:0002161">
    <property type="term" value="F:aminoacyl-tRNA deacylase activity"/>
    <property type="evidence" value="ECO:0007669"/>
    <property type="project" value="InterPro"/>
</dbReference>
<dbReference type="GO" id="GO:0005524">
    <property type="term" value="F:ATP binding"/>
    <property type="evidence" value="ECO:0007669"/>
    <property type="project" value="UniProtKB-UniRule"/>
</dbReference>
<dbReference type="GO" id="GO:0004822">
    <property type="term" value="F:isoleucine-tRNA ligase activity"/>
    <property type="evidence" value="ECO:0007669"/>
    <property type="project" value="UniProtKB-UniRule"/>
</dbReference>
<dbReference type="GO" id="GO:0000049">
    <property type="term" value="F:tRNA binding"/>
    <property type="evidence" value="ECO:0007669"/>
    <property type="project" value="InterPro"/>
</dbReference>
<dbReference type="GO" id="GO:0008270">
    <property type="term" value="F:zinc ion binding"/>
    <property type="evidence" value="ECO:0007669"/>
    <property type="project" value="UniProtKB-UniRule"/>
</dbReference>
<dbReference type="GO" id="GO:0006428">
    <property type="term" value="P:isoleucyl-tRNA aminoacylation"/>
    <property type="evidence" value="ECO:0007669"/>
    <property type="project" value="UniProtKB-UniRule"/>
</dbReference>
<dbReference type="CDD" id="cd07960">
    <property type="entry name" value="Anticodon_Ia_Ile_BEm"/>
    <property type="match status" value="1"/>
</dbReference>
<dbReference type="FunFam" id="3.40.50.620:FF:000042">
    <property type="entry name" value="Isoleucine--tRNA ligase"/>
    <property type="match status" value="1"/>
</dbReference>
<dbReference type="FunFam" id="3.40.50.620:FF:000048">
    <property type="entry name" value="Isoleucine--tRNA ligase"/>
    <property type="match status" value="1"/>
</dbReference>
<dbReference type="FunFam" id="3.90.740.10:FF:000022">
    <property type="entry name" value="Isoleucine--tRNA ligase"/>
    <property type="match status" value="1"/>
</dbReference>
<dbReference type="Gene3D" id="1.10.730.20">
    <property type="match status" value="1"/>
</dbReference>
<dbReference type="Gene3D" id="3.40.50.620">
    <property type="entry name" value="HUPs"/>
    <property type="match status" value="2"/>
</dbReference>
<dbReference type="HAMAP" id="MF_02002">
    <property type="entry name" value="Ile_tRNA_synth_type1"/>
    <property type="match status" value="1"/>
</dbReference>
<dbReference type="InterPro" id="IPR001412">
    <property type="entry name" value="aa-tRNA-synth_I_CS"/>
</dbReference>
<dbReference type="InterPro" id="IPR002300">
    <property type="entry name" value="aa-tRNA-synth_Ia"/>
</dbReference>
<dbReference type="InterPro" id="IPR033708">
    <property type="entry name" value="Anticodon_Ile_BEm"/>
</dbReference>
<dbReference type="InterPro" id="IPR002301">
    <property type="entry name" value="Ile-tRNA-ligase"/>
</dbReference>
<dbReference type="InterPro" id="IPR023585">
    <property type="entry name" value="Ile-tRNA-ligase_type1"/>
</dbReference>
<dbReference type="InterPro" id="IPR050081">
    <property type="entry name" value="Ile-tRNA_ligase"/>
</dbReference>
<dbReference type="InterPro" id="IPR013155">
    <property type="entry name" value="M/V/L/I-tRNA-synth_anticd-bd"/>
</dbReference>
<dbReference type="InterPro" id="IPR014729">
    <property type="entry name" value="Rossmann-like_a/b/a_fold"/>
</dbReference>
<dbReference type="InterPro" id="IPR009080">
    <property type="entry name" value="tRNAsynth_Ia_anticodon-bd"/>
</dbReference>
<dbReference type="InterPro" id="IPR009008">
    <property type="entry name" value="Val/Leu/Ile-tRNA-synth_edit"/>
</dbReference>
<dbReference type="InterPro" id="IPR010663">
    <property type="entry name" value="Znf_FPG/IleRS"/>
</dbReference>
<dbReference type="NCBIfam" id="TIGR00392">
    <property type="entry name" value="ileS"/>
    <property type="match status" value="1"/>
</dbReference>
<dbReference type="PANTHER" id="PTHR42765:SF1">
    <property type="entry name" value="ISOLEUCINE--TRNA LIGASE, MITOCHONDRIAL"/>
    <property type="match status" value="1"/>
</dbReference>
<dbReference type="PANTHER" id="PTHR42765">
    <property type="entry name" value="SOLEUCYL-TRNA SYNTHETASE"/>
    <property type="match status" value="1"/>
</dbReference>
<dbReference type="Pfam" id="PF08264">
    <property type="entry name" value="Anticodon_1"/>
    <property type="match status" value="1"/>
</dbReference>
<dbReference type="Pfam" id="PF00133">
    <property type="entry name" value="tRNA-synt_1"/>
    <property type="match status" value="1"/>
</dbReference>
<dbReference type="Pfam" id="PF06827">
    <property type="entry name" value="zf-FPG_IleRS"/>
    <property type="match status" value="1"/>
</dbReference>
<dbReference type="PRINTS" id="PR00984">
    <property type="entry name" value="TRNASYNTHILE"/>
</dbReference>
<dbReference type="SUPFAM" id="SSF47323">
    <property type="entry name" value="Anticodon-binding domain of a subclass of class I aminoacyl-tRNA synthetases"/>
    <property type="match status" value="1"/>
</dbReference>
<dbReference type="SUPFAM" id="SSF52374">
    <property type="entry name" value="Nucleotidylyl transferase"/>
    <property type="match status" value="1"/>
</dbReference>
<dbReference type="SUPFAM" id="SSF50677">
    <property type="entry name" value="ValRS/IleRS/LeuRS editing domain"/>
    <property type="match status" value="1"/>
</dbReference>
<dbReference type="PROSITE" id="PS00178">
    <property type="entry name" value="AA_TRNA_LIGASE_I"/>
    <property type="match status" value="1"/>
</dbReference>
<comment type="function">
    <text evidence="1">Catalyzes the attachment of isoleucine to tRNA(Ile). As IleRS can inadvertently accommodate and process structurally similar amino acids such as valine, to avoid such errors it has two additional distinct tRNA(Ile)-dependent editing activities. One activity is designated as 'pretransfer' editing and involves the hydrolysis of activated Val-AMP. The other activity is designated 'posttransfer' editing and involves deacylation of mischarged Val-tRNA(Ile).</text>
</comment>
<comment type="catalytic activity">
    <reaction evidence="1">
        <text>tRNA(Ile) + L-isoleucine + ATP = L-isoleucyl-tRNA(Ile) + AMP + diphosphate</text>
        <dbReference type="Rhea" id="RHEA:11060"/>
        <dbReference type="Rhea" id="RHEA-COMP:9666"/>
        <dbReference type="Rhea" id="RHEA-COMP:9695"/>
        <dbReference type="ChEBI" id="CHEBI:30616"/>
        <dbReference type="ChEBI" id="CHEBI:33019"/>
        <dbReference type="ChEBI" id="CHEBI:58045"/>
        <dbReference type="ChEBI" id="CHEBI:78442"/>
        <dbReference type="ChEBI" id="CHEBI:78528"/>
        <dbReference type="ChEBI" id="CHEBI:456215"/>
        <dbReference type="EC" id="6.1.1.5"/>
    </reaction>
</comment>
<comment type="cofactor">
    <cofactor evidence="1">
        <name>Zn(2+)</name>
        <dbReference type="ChEBI" id="CHEBI:29105"/>
    </cofactor>
    <text evidence="1">Binds 1 zinc ion per subunit.</text>
</comment>
<comment type="subunit">
    <text evidence="1">Monomer.</text>
</comment>
<comment type="subcellular location">
    <subcellularLocation>
        <location evidence="1">Cytoplasm</location>
    </subcellularLocation>
</comment>
<comment type="domain">
    <text evidence="1">IleRS has two distinct active sites: one for aminoacylation and one for editing. The misactivated valine is translocated from the active site to the editing site, which sterically excludes the correctly activated isoleucine. The single editing site contains two valyl binding pockets, one specific for each substrate (Val-AMP or Val-tRNA(Ile)).</text>
</comment>
<comment type="similarity">
    <text evidence="1">Belongs to the class-I aminoacyl-tRNA synthetase family. IleS type 1 subfamily.</text>
</comment>
<sequence>MTDYSKTVNLLESPFPMRGNLAKREPAWLKSWYEQKRYQKLREIAKGRPKFILHDGPPYANGDIHIGHAVNKILKDIIIRSKTQAGFDAPYVPGWDCHGLPIEVMVEKLHGKDMPKARFRELCREYAAEQVACQKKDFIRLGVLGDWDKPYLTMDFKTEADTVRMLGEIYKSGYLYRGAKPVQFCLDCGSSLAEAEVEYKDKVSPAIDVGYPFKDTAALAAAFGLAGIEGKAFAVIWTTTPWTLPASQAVSAGADVVYQLIDTPKGKLVLAKDLAEDALKRYGFSDGIAILAETTGDKLENLHMNHPFLERDIPMLNGDHVTTDAGTGLVHTAPAHGLEDYAVCNKYGIELYNPVNAEGKYISETPRVAGMSVWEANPVILQWLEETGNLLASSKIEHSYAHCWRHKTPLIYRATGQWFVGMDKAGADGKTLRDKAIKAVDDTEFFPSWGRARLEAMIEGRPDWVVSRQRYWGTPMTFFVHKETGELHPNSAELLEKVAQRIEEKGIEAWFSLDKGELLSAEDCEHYDKLSDTMDVWFDSGSTHYSVVKQREELDWPADLYLEGSDQHRGWFQSSMLTGCASSMGRAPYKQLLTHGFVVDQNGRKMSKSIGNVVAPQEVYNEFGADILRLWAASTDYSGELAISKEILKRVTESYRRIRNTLSFLFANLSDFNPIEDAVQQADMVEIDRYAVVLARQLQERLAGDYYPRYTFHFAVKDIVSFCSEDLGAFYLDILKDRLYTTKADSRARRSAQTALYHITRSLVLLIAPILCFTGEEAWDIIGGGEEDSVLFHTWHEFPTINEKAEAELVKKWTAIREAREAVTAAIEPLRADKTVGSSLQAEAEITAPEEMAGYLNALGEELRFALLVSKAEVKVGSELAVAAKASDGEKCERCWHYTRDVGAVAGYETVCKRCAENVGREGETRHYA</sequence>
<protein>
    <recommendedName>
        <fullName evidence="1">Isoleucine--tRNA ligase</fullName>
        <ecNumber evidence="1">6.1.1.5</ecNumber>
    </recommendedName>
    <alternativeName>
        <fullName evidence="1">Isoleucyl-tRNA synthetase</fullName>
        <shortName evidence="1">IleRS</shortName>
    </alternativeName>
</protein>